<protein>
    <recommendedName>
        <fullName evidence="1">S-adenosylmethionine synthase</fullName>
        <shortName evidence="1">AdoMet synthase</shortName>
        <ecNumber evidence="1">2.5.1.6</ecNumber>
    </recommendedName>
    <alternativeName>
        <fullName evidence="1">MAT</fullName>
    </alternativeName>
    <alternativeName>
        <fullName evidence="1">Methionine adenosyltransferase</fullName>
    </alternativeName>
</protein>
<reference key="1">
    <citation type="submission" date="2007-06" db="EMBL/GenBank/DDBJ databases">
        <authorList>
            <person name="Brinkac L.M."/>
            <person name="Daugherty S."/>
            <person name="Dodson R.J."/>
            <person name="Madupu R."/>
            <person name="Brown J.L."/>
            <person name="Bruce D."/>
            <person name="Detter C."/>
            <person name="Munk C."/>
            <person name="Smith L.A."/>
            <person name="Smith T.J."/>
            <person name="White O."/>
            <person name="Brettin T.S."/>
        </authorList>
    </citation>
    <scope>NUCLEOTIDE SEQUENCE [LARGE SCALE GENOMIC DNA]</scope>
    <source>
        <strain>Langeland / NCTC 10281 / Type F</strain>
    </source>
</reference>
<organism>
    <name type="scientific">Clostridium botulinum (strain Langeland / NCTC 10281 / Type F)</name>
    <dbReference type="NCBI Taxonomy" id="441772"/>
    <lineage>
        <taxon>Bacteria</taxon>
        <taxon>Bacillati</taxon>
        <taxon>Bacillota</taxon>
        <taxon>Clostridia</taxon>
        <taxon>Eubacteriales</taxon>
        <taxon>Clostridiaceae</taxon>
        <taxon>Clostridium</taxon>
    </lineage>
</organism>
<feature type="chain" id="PRO_1000007937" description="S-adenosylmethionine synthase">
    <location>
        <begin position="1"/>
        <end position="391"/>
    </location>
</feature>
<feature type="region of interest" description="Flexible loop" evidence="1">
    <location>
        <begin position="98"/>
        <end position="108"/>
    </location>
</feature>
<feature type="binding site" description="in other chain" evidence="1">
    <location>
        <position position="14"/>
    </location>
    <ligand>
        <name>ATP</name>
        <dbReference type="ChEBI" id="CHEBI:30616"/>
        <note>ligand shared between two neighboring subunits</note>
    </ligand>
</feature>
<feature type="binding site" evidence="1">
    <location>
        <position position="16"/>
    </location>
    <ligand>
        <name>Mg(2+)</name>
        <dbReference type="ChEBI" id="CHEBI:18420"/>
    </ligand>
</feature>
<feature type="binding site" evidence="1">
    <location>
        <position position="42"/>
    </location>
    <ligand>
        <name>K(+)</name>
        <dbReference type="ChEBI" id="CHEBI:29103"/>
    </ligand>
</feature>
<feature type="binding site" description="in other chain" evidence="1">
    <location>
        <position position="55"/>
    </location>
    <ligand>
        <name>L-methionine</name>
        <dbReference type="ChEBI" id="CHEBI:57844"/>
        <note>ligand shared between two neighboring subunits</note>
    </ligand>
</feature>
<feature type="binding site" description="in other chain" evidence="1">
    <location>
        <position position="98"/>
    </location>
    <ligand>
        <name>L-methionine</name>
        <dbReference type="ChEBI" id="CHEBI:57844"/>
        <note>ligand shared between two neighboring subunits</note>
    </ligand>
</feature>
<feature type="binding site" description="in other chain" evidence="1">
    <location>
        <begin position="172"/>
        <end position="174"/>
    </location>
    <ligand>
        <name>ATP</name>
        <dbReference type="ChEBI" id="CHEBI:30616"/>
        <note>ligand shared between two neighboring subunits</note>
    </ligand>
</feature>
<feature type="binding site" description="in other chain" evidence="1">
    <location>
        <begin position="238"/>
        <end position="239"/>
    </location>
    <ligand>
        <name>ATP</name>
        <dbReference type="ChEBI" id="CHEBI:30616"/>
        <note>ligand shared between two neighboring subunits</note>
    </ligand>
</feature>
<feature type="binding site" evidence="1">
    <location>
        <position position="247"/>
    </location>
    <ligand>
        <name>ATP</name>
        <dbReference type="ChEBI" id="CHEBI:30616"/>
        <note>ligand shared between two neighboring subunits</note>
    </ligand>
</feature>
<feature type="binding site" evidence="1">
    <location>
        <position position="247"/>
    </location>
    <ligand>
        <name>L-methionine</name>
        <dbReference type="ChEBI" id="CHEBI:57844"/>
        <note>ligand shared between two neighboring subunits</note>
    </ligand>
</feature>
<feature type="binding site" description="in other chain" evidence="1">
    <location>
        <begin position="253"/>
        <end position="254"/>
    </location>
    <ligand>
        <name>ATP</name>
        <dbReference type="ChEBI" id="CHEBI:30616"/>
        <note>ligand shared between two neighboring subunits</note>
    </ligand>
</feature>
<feature type="binding site" evidence="1">
    <location>
        <position position="270"/>
    </location>
    <ligand>
        <name>ATP</name>
        <dbReference type="ChEBI" id="CHEBI:30616"/>
        <note>ligand shared between two neighboring subunits</note>
    </ligand>
</feature>
<feature type="binding site" evidence="1">
    <location>
        <position position="274"/>
    </location>
    <ligand>
        <name>ATP</name>
        <dbReference type="ChEBI" id="CHEBI:30616"/>
        <note>ligand shared between two neighboring subunits</note>
    </ligand>
</feature>
<feature type="binding site" description="in other chain" evidence="1">
    <location>
        <position position="278"/>
    </location>
    <ligand>
        <name>L-methionine</name>
        <dbReference type="ChEBI" id="CHEBI:57844"/>
        <note>ligand shared between two neighboring subunits</note>
    </ligand>
</feature>
<sequence length="391" mass="43054">MRKLFTSESVTEGHPDKICDQISDAVLDAILDKDPNGRVACETAVTTGMVMVMGEISTKCYVDIPKLVRETIRGIGYDRAKYGFDCETCSVITSIDEQSVDIAMGVDEALESKKGEMDRLDAVGAGDQGMMFGFATNETKEYMPMPIEMAHKLSRRLSEVRKNGTLPYLRPDGKTQVTVEYENGKPVRIDAIVISTQHGPEVYLEQIEKDIKEHVIKVIVPSELLDENTKYFINPTGRFVVGGPQGDSGLTGRKIIVDTYGGYGRHGGGAFSGKDPTKVDRSAAYAARWVAKNLVAAGVADKLEIQLAYAIGVAKPVSISVDTFGTGKMTDEEIVSIVNKVFDLRPGAIIRDLDLRRPIYKQVAAYGHFGRTDIDVPWERLDKVEEIKKHI</sequence>
<name>METK_CLOBL</name>
<accession>A7G9S1</accession>
<keyword id="KW-0067">ATP-binding</keyword>
<keyword id="KW-0963">Cytoplasm</keyword>
<keyword id="KW-0460">Magnesium</keyword>
<keyword id="KW-0479">Metal-binding</keyword>
<keyword id="KW-0547">Nucleotide-binding</keyword>
<keyword id="KW-0554">One-carbon metabolism</keyword>
<keyword id="KW-0630">Potassium</keyword>
<keyword id="KW-0808">Transferase</keyword>
<dbReference type="EC" id="2.5.1.6" evidence="1"/>
<dbReference type="EMBL" id="CP000728">
    <property type="protein sequence ID" value="ABS39870.1"/>
    <property type="molecule type" value="Genomic_DNA"/>
</dbReference>
<dbReference type="RefSeq" id="WP_011987248.1">
    <property type="nucleotide sequence ID" value="NC_009699.1"/>
</dbReference>
<dbReference type="SMR" id="A7G9S1"/>
<dbReference type="KEGG" id="cbf:CLI_0231"/>
<dbReference type="HOGENOM" id="CLU_041802_1_1_9"/>
<dbReference type="UniPathway" id="UPA00315">
    <property type="reaction ID" value="UER00080"/>
</dbReference>
<dbReference type="Proteomes" id="UP000002410">
    <property type="component" value="Chromosome"/>
</dbReference>
<dbReference type="GO" id="GO:0005737">
    <property type="term" value="C:cytoplasm"/>
    <property type="evidence" value="ECO:0007669"/>
    <property type="project" value="UniProtKB-SubCell"/>
</dbReference>
<dbReference type="GO" id="GO:0005524">
    <property type="term" value="F:ATP binding"/>
    <property type="evidence" value="ECO:0007669"/>
    <property type="project" value="UniProtKB-UniRule"/>
</dbReference>
<dbReference type="GO" id="GO:0000287">
    <property type="term" value="F:magnesium ion binding"/>
    <property type="evidence" value="ECO:0007669"/>
    <property type="project" value="UniProtKB-UniRule"/>
</dbReference>
<dbReference type="GO" id="GO:0004478">
    <property type="term" value="F:methionine adenosyltransferase activity"/>
    <property type="evidence" value="ECO:0007669"/>
    <property type="project" value="UniProtKB-UniRule"/>
</dbReference>
<dbReference type="GO" id="GO:0006730">
    <property type="term" value="P:one-carbon metabolic process"/>
    <property type="evidence" value="ECO:0007669"/>
    <property type="project" value="UniProtKB-KW"/>
</dbReference>
<dbReference type="GO" id="GO:0006556">
    <property type="term" value="P:S-adenosylmethionine biosynthetic process"/>
    <property type="evidence" value="ECO:0007669"/>
    <property type="project" value="UniProtKB-UniRule"/>
</dbReference>
<dbReference type="CDD" id="cd18079">
    <property type="entry name" value="S-AdoMet_synt"/>
    <property type="match status" value="1"/>
</dbReference>
<dbReference type="FunFam" id="3.30.300.10:FF:000003">
    <property type="entry name" value="S-adenosylmethionine synthase"/>
    <property type="match status" value="1"/>
</dbReference>
<dbReference type="FunFam" id="3.30.300.10:FF:000004">
    <property type="entry name" value="S-adenosylmethionine synthase"/>
    <property type="match status" value="1"/>
</dbReference>
<dbReference type="Gene3D" id="3.30.300.10">
    <property type="match status" value="3"/>
</dbReference>
<dbReference type="HAMAP" id="MF_00086">
    <property type="entry name" value="S_AdoMet_synth1"/>
    <property type="match status" value="1"/>
</dbReference>
<dbReference type="InterPro" id="IPR022631">
    <property type="entry name" value="ADOMET_SYNTHASE_CS"/>
</dbReference>
<dbReference type="InterPro" id="IPR022630">
    <property type="entry name" value="S-AdoMet_synt_C"/>
</dbReference>
<dbReference type="InterPro" id="IPR022629">
    <property type="entry name" value="S-AdoMet_synt_central"/>
</dbReference>
<dbReference type="InterPro" id="IPR022628">
    <property type="entry name" value="S-AdoMet_synt_N"/>
</dbReference>
<dbReference type="InterPro" id="IPR002133">
    <property type="entry name" value="S-AdoMet_synthetase"/>
</dbReference>
<dbReference type="InterPro" id="IPR022636">
    <property type="entry name" value="S-AdoMet_synthetase_sfam"/>
</dbReference>
<dbReference type="NCBIfam" id="TIGR01034">
    <property type="entry name" value="metK"/>
    <property type="match status" value="1"/>
</dbReference>
<dbReference type="PANTHER" id="PTHR11964">
    <property type="entry name" value="S-ADENOSYLMETHIONINE SYNTHETASE"/>
    <property type="match status" value="1"/>
</dbReference>
<dbReference type="Pfam" id="PF02773">
    <property type="entry name" value="S-AdoMet_synt_C"/>
    <property type="match status" value="1"/>
</dbReference>
<dbReference type="Pfam" id="PF02772">
    <property type="entry name" value="S-AdoMet_synt_M"/>
    <property type="match status" value="1"/>
</dbReference>
<dbReference type="Pfam" id="PF00438">
    <property type="entry name" value="S-AdoMet_synt_N"/>
    <property type="match status" value="1"/>
</dbReference>
<dbReference type="PIRSF" id="PIRSF000497">
    <property type="entry name" value="MAT"/>
    <property type="match status" value="1"/>
</dbReference>
<dbReference type="SUPFAM" id="SSF55973">
    <property type="entry name" value="S-adenosylmethionine synthetase"/>
    <property type="match status" value="3"/>
</dbReference>
<dbReference type="PROSITE" id="PS00376">
    <property type="entry name" value="ADOMET_SYNTHASE_1"/>
    <property type="match status" value="1"/>
</dbReference>
<dbReference type="PROSITE" id="PS00377">
    <property type="entry name" value="ADOMET_SYNTHASE_2"/>
    <property type="match status" value="1"/>
</dbReference>
<comment type="function">
    <text evidence="1">Catalyzes the formation of S-adenosylmethionine (AdoMet) from methionine and ATP. The overall synthetic reaction is composed of two sequential steps, AdoMet formation and the subsequent tripolyphosphate hydrolysis which occurs prior to release of AdoMet from the enzyme.</text>
</comment>
<comment type="catalytic activity">
    <reaction evidence="1">
        <text>L-methionine + ATP + H2O = S-adenosyl-L-methionine + phosphate + diphosphate</text>
        <dbReference type="Rhea" id="RHEA:21080"/>
        <dbReference type="ChEBI" id="CHEBI:15377"/>
        <dbReference type="ChEBI" id="CHEBI:30616"/>
        <dbReference type="ChEBI" id="CHEBI:33019"/>
        <dbReference type="ChEBI" id="CHEBI:43474"/>
        <dbReference type="ChEBI" id="CHEBI:57844"/>
        <dbReference type="ChEBI" id="CHEBI:59789"/>
        <dbReference type="EC" id="2.5.1.6"/>
    </reaction>
</comment>
<comment type="cofactor">
    <cofactor evidence="1">
        <name>Mg(2+)</name>
        <dbReference type="ChEBI" id="CHEBI:18420"/>
    </cofactor>
    <text evidence="1">Binds 2 divalent ions per subunit.</text>
</comment>
<comment type="cofactor">
    <cofactor evidence="1">
        <name>K(+)</name>
        <dbReference type="ChEBI" id="CHEBI:29103"/>
    </cofactor>
    <text evidence="1">Binds 1 potassium ion per subunit.</text>
</comment>
<comment type="pathway">
    <text evidence="1">Amino-acid biosynthesis; S-adenosyl-L-methionine biosynthesis; S-adenosyl-L-methionine from L-methionine: step 1/1.</text>
</comment>
<comment type="subunit">
    <text evidence="1">Homotetramer; dimer of dimers.</text>
</comment>
<comment type="subcellular location">
    <subcellularLocation>
        <location evidence="1">Cytoplasm</location>
    </subcellularLocation>
</comment>
<comment type="similarity">
    <text evidence="1">Belongs to the AdoMet synthase family.</text>
</comment>
<gene>
    <name evidence="1" type="primary">metK</name>
    <name type="ordered locus">CLI_0231</name>
</gene>
<evidence type="ECO:0000255" key="1">
    <source>
        <dbReference type="HAMAP-Rule" id="MF_00086"/>
    </source>
</evidence>
<proteinExistence type="inferred from homology"/>